<name>HBE_CALGO</name>
<reference key="1">
    <citation type="journal article" date="1993" name="Mol. Phylogenet. Evol.">
        <title>Molecular phylogeny of the New World monkeys (Platyrrhini, primates).</title>
        <authorList>
            <person name="Schneider H."/>
            <person name="Schneider M.P.C."/>
            <person name="Sampaio I."/>
            <person name="Harada M.L."/>
            <person name="Stanhope M.J."/>
            <person name="Czekysbuaj J."/>
            <person name="Goodman M."/>
        </authorList>
    </citation>
    <scope>NUCLEOTIDE SEQUENCE [GENOMIC DNA]</scope>
    <source>
        <tissue>Lymphocyte</tissue>
    </source>
</reference>
<sequence length="147" mass="16262">MVHFTAEEKAAITSLWGKMNVEEAGGEALGRLLVVYPWTQRFFDNFGNLSSPSAILGNPKVKAHGKKVLTSFGDAIKNMDNLKTTFAKLSELHCDKLHVDPENFRLLGNVMVIILATHFGKEFTPEVQAAWQKLVSAVAIALGHKYH</sequence>
<comment type="function">
    <text>The epsilon chain is a beta-type chain of early mammalian embryonic hemoglobin.</text>
</comment>
<comment type="subunit">
    <text>Heterotetramer of two alpha chains and two epsilon chains in early embryonic hemoglobin Gower-2; two zeta chains and two epsilon chains in early embryonic hemoglobin Gower-1.</text>
</comment>
<comment type="tissue specificity">
    <text>Red blood cells.</text>
</comment>
<comment type="similarity">
    <text evidence="2">Belongs to the globin family.</text>
</comment>
<organism>
    <name type="scientific">Callimico goeldii</name>
    <name type="common">Goeldi's marmoset</name>
    <dbReference type="NCBI Taxonomy" id="9495"/>
    <lineage>
        <taxon>Eukaryota</taxon>
        <taxon>Metazoa</taxon>
        <taxon>Chordata</taxon>
        <taxon>Craniata</taxon>
        <taxon>Vertebrata</taxon>
        <taxon>Euteleostomi</taxon>
        <taxon>Mammalia</taxon>
        <taxon>Eutheria</taxon>
        <taxon>Euarchontoglires</taxon>
        <taxon>Primates</taxon>
        <taxon>Haplorrhini</taxon>
        <taxon>Platyrrhini</taxon>
        <taxon>Cebidae</taxon>
        <taxon>Callitrichinae</taxon>
        <taxon>Callimico</taxon>
    </lineage>
</organism>
<proteinExistence type="evidence at transcript level"/>
<accession>P68024</accession>
<accession>P43350</accession>
<feature type="chain" id="PRO_0000053196" description="Hemoglobin subunit epsilon">
    <location>
        <begin position="1"/>
        <end position="147"/>
    </location>
</feature>
<feature type="domain" description="Globin" evidence="2">
    <location>
        <begin position="3"/>
        <end position="147"/>
    </location>
</feature>
<feature type="binding site" description="distal binding residue" evidence="2">
    <location>
        <position position="64"/>
    </location>
    <ligand>
        <name>heme b</name>
        <dbReference type="ChEBI" id="CHEBI:60344"/>
    </ligand>
    <ligandPart>
        <name>Fe</name>
        <dbReference type="ChEBI" id="CHEBI:18248"/>
    </ligandPart>
</feature>
<feature type="binding site" description="proximal binding residue" evidence="2">
    <location>
        <position position="93"/>
    </location>
    <ligand>
        <name>heme b</name>
        <dbReference type="ChEBI" id="CHEBI:60344"/>
    </ligand>
    <ligandPart>
        <name>Fe</name>
        <dbReference type="ChEBI" id="CHEBI:18248"/>
    </ligandPart>
</feature>
<feature type="modified residue" description="Phosphoserine" evidence="1">
    <location>
        <position position="14"/>
    </location>
</feature>
<feature type="modified residue" description="Phosphoserine" evidence="1">
    <location>
        <position position="51"/>
    </location>
</feature>
<keyword id="KW-0349">Heme</keyword>
<keyword id="KW-0408">Iron</keyword>
<keyword id="KW-0479">Metal-binding</keyword>
<keyword id="KW-0561">Oxygen transport</keyword>
<keyword id="KW-0597">Phosphoprotein</keyword>
<keyword id="KW-0813">Transport</keyword>
<evidence type="ECO:0000250" key="1">
    <source>
        <dbReference type="UniProtKB" id="P02100"/>
    </source>
</evidence>
<evidence type="ECO:0000255" key="2">
    <source>
        <dbReference type="PROSITE-ProRule" id="PRU00238"/>
    </source>
</evidence>
<dbReference type="EMBL" id="L25364">
    <property type="protein sequence ID" value="AAA35442.1"/>
    <property type="molecule type" value="Genomic_DNA"/>
</dbReference>
<dbReference type="SMR" id="P68024"/>
<dbReference type="GO" id="GO:0072562">
    <property type="term" value="C:blood microparticle"/>
    <property type="evidence" value="ECO:0007669"/>
    <property type="project" value="TreeGrafter"/>
</dbReference>
<dbReference type="GO" id="GO:0031838">
    <property type="term" value="C:haptoglobin-hemoglobin complex"/>
    <property type="evidence" value="ECO:0007669"/>
    <property type="project" value="TreeGrafter"/>
</dbReference>
<dbReference type="GO" id="GO:0005833">
    <property type="term" value="C:hemoglobin complex"/>
    <property type="evidence" value="ECO:0007669"/>
    <property type="project" value="InterPro"/>
</dbReference>
<dbReference type="GO" id="GO:0031720">
    <property type="term" value="F:haptoglobin binding"/>
    <property type="evidence" value="ECO:0007669"/>
    <property type="project" value="TreeGrafter"/>
</dbReference>
<dbReference type="GO" id="GO:0020037">
    <property type="term" value="F:heme binding"/>
    <property type="evidence" value="ECO:0007669"/>
    <property type="project" value="InterPro"/>
</dbReference>
<dbReference type="GO" id="GO:0031721">
    <property type="term" value="F:hemoglobin alpha binding"/>
    <property type="evidence" value="ECO:0007669"/>
    <property type="project" value="TreeGrafter"/>
</dbReference>
<dbReference type="GO" id="GO:0046872">
    <property type="term" value="F:metal ion binding"/>
    <property type="evidence" value="ECO:0007669"/>
    <property type="project" value="UniProtKB-KW"/>
</dbReference>
<dbReference type="GO" id="GO:0043177">
    <property type="term" value="F:organic acid binding"/>
    <property type="evidence" value="ECO:0007669"/>
    <property type="project" value="TreeGrafter"/>
</dbReference>
<dbReference type="GO" id="GO:0019825">
    <property type="term" value="F:oxygen binding"/>
    <property type="evidence" value="ECO:0007669"/>
    <property type="project" value="InterPro"/>
</dbReference>
<dbReference type="GO" id="GO:0005344">
    <property type="term" value="F:oxygen carrier activity"/>
    <property type="evidence" value="ECO:0007669"/>
    <property type="project" value="UniProtKB-KW"/>
</dbReference>
<dbReference type="GO" id="GO:0004601">
    <property type="term" value="F:peroxidase activity"/>
    <property type="evidence" value="ECO:0007669"/>
    <property type="project" value="TreeGrafter"/>
</dbReference>
<dbReference type="GO" id="GO:0042744">
    <property type="term" value="P:hydrogen peroxide catabolic process"/>
    <property type="evidence" value="ECO:0007669"/>
    <property type="project" value="TreeGrafter"/>
</dbReference>
<dbReference type="CDD" id="cd08925">
    <property type="entry name" value="Hb-beta-like"/>
    <property type="match status" value="1"/>
</dbReference>
<dbReference type="FunFam" id="1.10.490.10:FF:000001">
    <property type="entry name" value="Hemoglobin subunit beta"/>
    <property type="match status" value="1"/>
</dbReference>
<dbReference type="Gene3D" id="1.10.490.10">
    <property type="entry name" value="Globins"/>
    <property type="match status" value="1"/>
</dbReference>
<dbReference type="InterPro" id="IPR000971">
    <property type="entry name" value="Globin"/>
</dbReference>
<dbReference type="InterPro" id="IPR009050">
    <property type="entry name" value="Globin-like_sf"/>
</dbReference>
<dbReference type="InterPro" id="IPR012292">
    <property type="entry name" value="Globin/Proto"/>
</dbReference>
<dbReference type="InterPro" id="IPR002337">
    <property type="entry name" value="Hemoglobin_b"/>
</dbReference>
<dbReference type="InterPro" id="IPR050056">
    <property type="entry name" value="Hemoglobin_oxygen_transport"/>
</dbReference>
<dbReference type="PANTHER" id="PTHR11442">
    <property type="entry name" value="HEMOGLOBIN FAMILY MEMBER"/>
    <property type="match status" value="1"/>
</dbReference>
<dbReference type="PANTHER" id="PTHR11442:SF7">
    <property type="entry name" value="HEMOGLOBIN SUBUNIT EPSILON"/>
    <property type="match status" value="1"/>
</dbReference>
<dbReference type="Pfam" id="PF00042">
    <property type="entry name" value="Globin"/>
    <property type="match status" value="1"/>
</dbReference>
<dbReference type="PRINTS" id="PR00814">
    <property type="entry name" value="BETAHAEM"/>
</dbReference>
<dbReference type="SUPFAM" id="SSF46458">
    <property type="entry name" value="Globin-like"/>
    <property type="match status" value="1"/>
</dbReference>
<dbReference type="PROSITE" id="PS01033">
    <property type="entry name" value="GLOBIN"/>
    <property type="match status" value="1"/>
</dbReference>
<gene>
    <name type="primary">HBE1</name>
</gene>
<protein>
    <recommendedName>
        <fullName>Hemoglobin subunit epsilon</fullName>
    </recommendedName>
    <alternativeName>
        <fullName>Epsilon-globin</fullName>
    </alternativeName>
    <alternativeName>
        <fullName>Hemoglobin epsilon chain</fullName>
    </alternativeName>
</protein>